<feature type="chain" id="PRO_1000192215" description="Endonuclease MutS2">
    <location>
        <begin position="1"/>
        <end position="788"/>
    </location>
</feature>
<feature type="domain" description="Smr" evidence="1">
    <location>
        <begin position="713"/>
        <end position="788"/>
    </location>
</feature>
<feature type="binding site" evidence="1">
    <location>
        <begin position="332"/>
        <end position="339"/>
    </location>
    <ligand>
        <name>ATP</name>
        <dbReference type="ChEBI" id="CHEBI:30616"/>
    </ligand>
</feature>
<proteinExistence type="inferred from homology"/>
<keyword id="KW-0067">ATP-binding</keyword>
<keyword id="KW-0238">DNA-binding</keyword>
<keyword id="KW-0255">Endonuclease</keyword>
<keyword id="KW-0378">Hydrolase</keyword>
<keyword id="KW-0540">Nuclease</keyword>
<keyword id="KW-0547">Nucleotide-binding</keyword>
<keyword id="KW-0694">RNA-binding</keyword>
<keyword id="KW-0699">rRNA-binding</keyword>
<dbReference type="EC" id="3.1.-.-" evidence="1"/>
<dbReference type="EC" id="3.6.4.-" evidence="1"/>
<dbReference type="EMBL" id="CP001581">
    <property type="protein sequence ID" value="ACO86481.1"/>
    <property type="molecule type" value="Genomic_DNA"/>
</dbReference>
<dbReference type="RefSeq" id="WP_003357786.1">
    <property type="nucleotide sequence ID" value="NC_012563.1"/>
</dbReference>
<dbReference type="SMR" id="C1FKL4"/>
<dbReference type="KEGG" id="cby:CLM_3528"/>
<dbReference type="eggNOG" id="COG1193">
    <property type="taxonomic scope" value="Bacteria"/>
</dbReference>
<dbReference type="HOGENOM" id="CLU_011252_2_1_9"/>
<dbReference type="Proteomes" id="UP000001374">
    <property type="component" value="Chromosome"/>
</dbReference>
<dbReference type="GO" id="GO:0005524">
    <property type="term" value="F:ATP binding"/>
    <property type="evidence" value="ECO:0007669"/>
    <property type="project" value="UniProtKB-UniRule"/>
</dbReference>
<dbReference type="GO" id="GO:0016887">
    <property type="term" value="F:ATP hydrolysis activity"/>
    <property type="evidence" value="ECO:0007669"/>
    <property type="project" value="InterPro"/>
</dbReference>
<dbReference type="GO" id="GO:0140664">
    <property type="term" value="F:ATP-dependent DNA damage sensor activity"/>
    <property type="evidence" value="ECO:0007669"/>
    <property type="project" value="InterPro"/>
</dbReference>
<dbReference type="GO" id="GO:0004519">
    <property type="term" value="F:endonuclease activity"/>
    <property type="evidence" value="ECO:0007669"/>
    <property type="project" value="UniProtKB-UniRule"/>
</dbReference>
<dbReference type="GO" id="GO:0030983">
    <property type="term" value="F:mismatched DNA binding"/>
    <property type="evidence" value="ECO:0007669"/>
    <property type="project" value="InterPro"/>
</dbReference>
<dbReference type="GO" id="GO:0043023">
    <property type="term" value="F:ribosomal large subunit binding"/>
    <property type="evidence" value="ECO:0007669"/>
    <property type="project" value="UniProtKB-UniRule"/>
</dbReference>
<dbReference type="GO" id="GO:0019843">
    <property type="term" value="F:rRNA binding"/>
    <property type="evidence" value="ECO:0007669"/>
    <property type="project" value="UniProtKB-UniRule"/>
</dbReference>
<dbReference type="GO" id="GO:0006298">
    <property type="term" value="P:mismatch repair"/>
    <property type="evidence" value="ECO:0007669"/>
    <property type="project" value="InterPro"/>
</dbReference>
<dbReference type="GO" id="GO:0045910">
    <property type="term" value="P:negative regulation of DNA recombination"/>
    <property type="evidence" value="ECO:0007669"/>
    <property type="project" value="InterPro"/>
</dbReference>
<dbReference type="GO" id="GO:0072344">
    <property type="term" value="P:rescue of stalled ribosome"/>
    <property type="evidence" value="ECO:0007669"/>
    <property type="project" value="UniProtKB-UniRule"/>
</dbReference>
<dbReference type="CDD" id="cd03280">
    <property type="entry name" value="ABC_MutS2"/>
    <property type="match status" value="1"/>
</dbReference>
<dbReference type="FunFam" id="3.30.1370.110:FF:000007">
    <property type="entry name" value="Endonuclease MutS2"/>
    <property type="match status" value="1"/>
</dbReference>
<dbReference type="FunFam" id="3.40.50.300:FF:000830">
    <property type="entry name" value="Endonuclease MutS2"/>
    <property type="match status" value="1"/>
</dbReference>
<dbReference type="Gene3D" id="3.30.1370.110">
    <property type="match status" value="1"/>
</dbReference>
<dbReference type="Gene3D" id="3.40.50.300">
    <property type="entry name" value="P-loop containing nucleotide triphosphate hydrolases"/>
    <property type="match status" value="1"/>
</dbReference>
<dbReference type="HAMAP" id="MF_00092">
    <property type="entry name" value="MutS2"/>
    <property type="match status" value="1"/>
</dbReference>
<dbReference type="InterPro" id="IPR000432">
    <property type="entry name" value="DNA_mismatch_repair_MutS_C"/>
</dbReference>
<dbReference type="InterPro" id="IPR007696">
    <property type="entry name" value="DNA_mismatch_repair_MutS_core"/>
</dbReference>
<dbReference type="InterPro" id="IPR036187">
    <property type="entry name" value="DNA_mismatch_repair_MutS_sf"/>
</dbReference>
<dbReference type="InterPro" id="IPR046893">
    <property type="entry name" value="MSSS"/>
</dbReference>
<dbReference type="InterPro" id="IPR045076">
    <property type="entry name" value="MutS"/>
</dbReference>
<dbReference type="InterPro" id="IPR005747">
    <property type="entry name" value="MutS2"/>
</dbReference>
<dbReference type="InterPro" id="IPR027417">
    <property type="entry name" value="P-loop_NTPase"/>
</dbReference>
<dbReference type="InterPro" id="IPR002625">
    <property type="entry name" value="Smr_dom"/>
</dbReference>
<dbReference type="InterPro" id="IPR036063">
    <property type="entry name" value="Smr_dom_sf"/>
</dbReference>
<dbReference type="NCBIfam" id="TIGR01069">
    <property type="entry name" value="mutS2"/>
    <property type="match status" value="1"/>
</dbReference>
<dbReference type="PANTHER" id="PTHR48466:SF2">
    <property type="entry name" value="OS10G0509000 PROTEIN"/>
    <property type="match status" value="1"/>
</dbReference>
<dbReference type="PANTHER" id="PTHR48466">
    <property type="entry name" value="OS10G0509000 PROTEIN-RELATED"/>
    <property type="match status" value="1"/>
</dbReference>
<dbReference type="Pfam" id="PF20297">
    <property type="entry name" value="MSSS"/>
    <property type="match status" value="1"/>
</dbReference>
<dbReference type="Pfam" id="PF00488">
    <property type="entry name" value="MutS_V"/>
    <property type="match status" value="1"/>
</dbReference>
<dbReference type="Pfam" id="PF01713">
    <property type="entry name" value="Smr"/>
    <property type="match status" value="1"/>
</dbReference>
<dbReference type="PIRSF" id="PIRSF005814">
    <property type="entry name" value="MutS_YshD"/>
    <property type="match status" value="1"/>
</dbReference>
<dbReference type="SMART" id="SM00534">
    <property type="entry name" value="MUTSac"/>
    <property type="match status" value="1"/>
</dbReference>
<dbReference type="SMART" id="SM00533">
    <property type="entry name" value="MUTSd"/>
    <property type="match status" value="1"/>
</dbReference>
<dbReference type="SMART" id="SM00463">
    <property type="entry name" value="SMR"/>
    <property type="match status" value="1"/>
</dbReference>
<dbReference type="SUPFAM" id="SSF48334">
    <property type="entry name" value="DNA repair protein MutS, domain III"/>
    <property type="match status" value="1"/>
</dbReference>
<dbReference type="SUPFAM" id="SSF52540">
    <property type="entry name" value="P-loop containing nucleoside triphosphate hydrolases"/>
    <property type="match status" value="1"/>
</dbReference>
<dbReference type="SUPFAM" id="SSF160443">
    <property type="entry name" value="SMR domain-like"/>
    <property type="match status" value="1"/>
</dbReference>
<dbReference type="PROSITE" id="PS00486">
    <property type="entry name" value="DNA_MISMATCH_REPAIR_2"/>
    <property type="match status" value="1"/>
</dbReference>
<dbReference type="PROSITE" id="PS50828">
    <property type="entry name" value="SMR"/>
    <property type="match status" value="1"/>
</dbReference>
<comment type="function">
    <text evidence="1">Endonuclease that is involved in the suppression of homologous recombination and thus may have a key role in the control of bacterial genetic diversity.</text>
</comment>
<comment type="function">
    <text evidence="1">Acts as a ribosome collision sensor, splitting the ribosome into its 2 subunits. Detects stalled/collided 70S ribosomes which it binds and splits by an ATP-hydrolysis driven conformational change. Acts upstream of the ribosome quality control system (RQC), a ribosome-associated complex that mediates the extraction of incompletely synthesized nascent chains from stalled ribosomes and their subsequent degradation. Probably generates substrates for RQC.</text>
</comment>
<comment type="subunit">
    <text evidence="1">Homodimer. Binds to stalled ribosomes, contacting rRNA.</text>
</comment>
<comment type="similarity">
    <text evidence="1">Belongs to the DNA mismatch repair MutS family. MutS2 subfamily.</text>
</comment>
<name>MUTS2_CLOBJ</name>
<protein>
    <recommendedName>
        <fullName evidence="1">Endonuclease MutS2</fullName>
        <ecNumber evidence="1">3.1.-.-</ecNumber>
    </recommendedName>
    <alternativeName>
        <fullName evidence="1">Ribosome-associated protein quality control-upstream factor</fullName>
        <shortName evidence="1">RQC-upstream factor</shortName>
        <shortName evidence="1">RqcU</shortName>
        <ecNumber evidence="1">3.6.4.-</ecNumber>
    </alternativeName>
</protein>
<evidence type="ECO:0000255" key="1">
    <source>
        <dbReference type="HAMAP-Rule" id="MF_00092"/>
    </source>
</evidence>
<organism>
    <name type="scientific">Clostridium botulinum (strain Kyoto / Type A2)</name>
    <dbReference type="NCBI Taxonomy" id="536232"/>
    <lineage>
        <taxon>Bacteria</taxon>
        <taxon>Bacillati</taxon>
        <taxon>Bacillota</taxon>
        <taxon>Clostridia</taxon>
        <taxon>Eubacteriales</taxon>
        <taxon>Clostridiaceae</taxon>
        <taxon>Clostridium</taxon>
    </lineage>
</organism>
<gene>
    <name evidence="1" type="primary">mutS2</name>
    <name evidence="1" type="synonym">rqcU</name>
    <name type="ordered locus">CLM_3528</name>
</gene>
<reference key="1">
    <citation type="submission" date="2008-10" db="EMBL/GenBank/DDBJ databases">
        <title>Genome sequence of Clostridium botulinum A2 Kyoto.</title>
        <authorList>
            <person name="Shrivastava S."/>
            <person name="Brinkac L.M."/>
            <person name="Brown J.L."/>
            <person name="Bruce D."/>
            <person name="Detter C.C."/>
            <person name="Johnson E.A."/>
            <person name="Munk C.A."/>
            <person name="Smith L.A."/>
            <person name="Smith T.J."/>
            <person name="Sutton G."/>
            <person name="Brettin T.S."/>
        </authorList>
    </citation>
    <scope>NUCLEOTIDE SEQUENCE [LARGE SCALE GENOMIC DNA]</scope>
    <source>
        <strain>Kyoto / Type A2</strain>
    </source>
</reference>
<sequence>MKDKSIKVLEFNKIQEILKNYTCTKAAKDIIEDLKPYDSMYEVREHLEETKEAFKLLITKGAPPFEGVYDIRSGISLAEKGSALLPGQLLKIAAVLRCARRFKEYINHKEEEESYRVLENICEGIFSLPKIEEEIFNAIEGEDEIADRASSTLYNIRRSLKEKNYSVRDKINSLVRSYSSYLQENIYTVRGDRYVLPVKAEHKGAVPGLVHDQSSTGATLFIEPMSLVNLNNEIKELMLKEKAEIERILTVLSAKINANITGVKTDANIVWELDFIFAKAKFASEYNCTCPTINDEGIVDIIEGRHPLIDRREVVPISVKLGEEFTSLMITGPNTGGKTVTLKTVGLIHLMAMSGLMIPARENSVISYFNNVFADIGDEQSIEQSLSTFSSHMKNIVEIMDKADENSLVLFDELGAGTDPTEGAALAISILENLRKRGTKIIATTHYSELKAYALRKEGVENASVEFDVETLRPTYRLLIGIPGKSNAFEISKRLGLPDYIIDFARENISNENIRFEELIENLQEKSIKAEEDARLAENLKLERDKEKKKYEEKLEGLQKVRDNALIDARREAKNIIKEAKEEADKILKDIRQLERMGYSSDARRKLEEERKKLKDKLDSIEEKEIKTVHEGEALKNVKEGDEVLLASINQKVIVLSKPDNKGDVLVQAGIMKITANIKDLRAAKGSNSNNSSSKIKKSKKLNLNLRRVESSVDLRGMDAEEAIYTVDKYLDEAYLGGLGEVTIVHGKGTGVLRKTIMDMLKGHSHVKKYRLGEYGEGGTGVTVVELK</sequence>
<accession>C1FKL4</accession>